<geneLocation type="plasmid">
    <name>pSDL2</name>
</geneLocation>
<reference key="1">
    <citation type="journal article" date="1991" name="Mol. Microbiol.">
        <title>Molecular analysis of the virulence locus of the Salmonella dublin plasmid pSDL2.</title>
        <authorList>
            <person name="Krause M."/>
            <person name="Roudier C."/>
            <person name="Fierer J."/>
            <person name="Harwood J."/>
            <person name="Guiney D."/>
        </authorList>
    </citation>
    <scope>NUCLEOTIDE SEQUENCE [GENOMIC DNA]</scope>
    <source>
        <strain>Lane</strain>
    </source>
</reference>
<reference key="2">
    <citation type="journal article" date="1992" name="J. Bacteriol.">
        <title>Characterization of translation termination mutations in the spv operon of the Salmonella virulence plasmid pSDL2.</title>
        <authorList>
            <person name="Roudier C."/>
            <person name="Fierer J."/>
            <person name="Guiney D.G."/>
        </authorList>
    </citation>
    <scope>DISRUPTION PHENOTYPE UPON MOUSE INFECTION</scope>
    <source>
        <strain>Lane</strain>
    </source>
</reference>
<reference key="3">
    <citation type="journal article" date="2002" name="Infect. Immun.">
        <title>Genetic requirements for Salmonella-induced cytopathology in human monocyte-derived macrophages.</title>
        <authorList>
            <person name="Browne S.H."/>
            <person name="Lesnick M.L."/>
            <person name="Guiney D.G."/>
        </authorList>
    </citation>
    <scope>DISRUPTION PHENOTYPE UPON INFECTION OF HUMAN MACROPHAGES</scope>
    <source>
        <strain>Lane</strain>
    </source>
</reference>
<comment type="function">
    <text>Positive regulator for the plasmid-encoded virulence factors SpvA, SpvB, and SpvC.</text>
</comment>
<comment type="subcellular location">
    <subcellularLocation>
        <location>Cytoplasm</location>
    </subcellularLocation>
</comment>
<comment type="disruption phenotype">
    <text evidence="2 3">A disruption of this gene is no longer virulent in mouse infection. 20-fold reduction in cytopathic effects in human monocyte-derived macrophages, loss of actin depolymerization in macrophages.</text>
</comment>
<comment type="miscellaneous">
    <text>In Salmonella spp. the spv gene cluster is encoded on a highly transmissible plasmid.</text>
</comment>
<comment type="similarity">
    <text evidence="4">Belongs to the LysR transcriptional regulatory family.</text>
</comment>
<keyword id="KW-0010">Activator</keyword>
<keyword id="KW-0963">Cytoplasm</keyword>
<keyword id="KW-0238">DNA-binding</keyword>
<keyword id="KW-0614">Plasmid</keyword>
<keyword id="KW-0804">Transcription</keyword>
<keyword id="KW-0805">Transcription regulation</keyword>
<keyword id="KW-0843">Virulence</keyword>
<proteinExistence type="inferred from homology"/>
<evidence type="ECO:0000255" key="1">
    <source>
        <dbReference type="PROSITE-ProRule" id="PRU00253"/>
    </source>
</evidence>
<evidence type="ECO:0000269" key="2">
    <source>
    </source>
</evidence>
<evidence type="ECO:0000269" key="3">
    <source>
    </source>
</evidence>
<evidence type="ECO:0000305" key="4"/>
<gene>
    <name type="primary">spvR</name>
    <name type="synonym">vsdA</name>
</gene>
<accession>P24417</accession>
<protein>
    <recommendedName>
        <fullName>Virulence genes transcriptional activator SpvR</fullName>
    </recommendedName>
</protein>
<organism>
    <name type="scientific">Salmonella dublin</name>
    <dbReference type="NCBI Taxonomy" id="98360"/>
    <lineage>
        <taxon>Bacteria</taxon>
        <taxon>Pseudomonadati</taxon>
        <taxon>Pseudomonadota</taxon>
        <taxon>Gammaproteobacteria</taxon>
        <taxon>Enterobacterales</taxon>
        <taxon>Enterobacteriaceae</taxon>
        <taxon>Salmonella</taxon>
    </lineage>
</organism>
<dbReference type="EMBL" id="X56727">
    <property type="protein sequence ID" value="CAA40047.1"/>
    <property type="molecule type" value="Genomic_DNA"/>
</dbReference>
<dbReference type="RefSeq" id="WP_000346692.1">
    <property type="nucleotide sequence ID" value="NZ_VDCP01000013.1"/>
</dbReference>
<dbReference type="RefSeq" id="YP_001716110.1">
    <property type="nucleotide sequence ID" value="NC_010422.1"/>
</dbReference>
<dbReference type="SMR" id="P24417"/>
<dbReference type="PHI-base" id="PHI:4515"/>
<dbReference type="GO" id="GO:0005737">
    <property type="term" value="C:cytoplasm"/>
    <property type="evidence" value="ECO:0007669"/>
    <property type="project" value="UniProtKB-SubCell"/>
</dbReference>
<dbReference type="GO" id="GO:0003677">
    <property type="term" value="F:DNA binding"/>
    <property type="evidence" value="ECO:0007669"/>
    <property type="project" value="UniProtKB-KW"/>
</dbReference>
<dbReference type="GO" id="GO:0003700">
    <property type="term" value="F:DNA-binding transcription factor activity"/>
    <property type="evidence" value="ECO:0007669"/>
    <property type="project" value="InterPro"/>
</dbReference>
<dbReference type="CDD" id="cd05466">
    <property type="entry name" value="PBP2_LTTR_substrate"/>
    <property type="match status" value="1"/>
</dbReference>
<dbReference type="Gene3D" id="1.10.10.10">
    <property type="entry name" value="Winged helix-like DNA-binding domain superfamily/Winged helix DNA-binding domain"/>
    <property type="match status" value="1"/>
</dbReference>
<dbReference type="InterPro" id="IPR050176">
    <property type="entry name" value="LTTR"/>
</dbReference>
<dbReference type="InterPro" id="IPR000847">
    <property type="entry name" value="Tscrpt_reg_HTH_LysR"/>
</dbReference>
<dbReference type="InterPro" id="IPR036388">
    <property type="entry name" value="WH-like_DNA-bd_sf"/>
</dbReference>
<dbReference type="InterPro" id="IPR036390">
    <property type="entry name" value="WH_DNA-bd_sf"/>
</dbReference>
<dbReference type="NCBIfam" id="NF011779">
    <property type="entry name" value="PRK15243.1"/>
    <property type="match status" value="1"/>
</dbReference>
<dbReference type="PANTHER" id="PTHR30579:SF7">
    <property type="entry name" value="HTH-TYPE TRANSCRIPTIONAL REGULATOR LRHA-RELATED"/>
    <property type="match status" value="1"/>
</dbReference>
<dbReference type="PANTHER" id="PTHR30579">
    <property type="entry name" value="TRANSCRIPTIONAL REGULATOR"/>
    <property type="match status" value="1"/>
</dbReference>
<dbReference type="Pfam" id="PF00126">
    <property type="entry name" value="HTH_1"/>
    <property type="match status" value="1"/>
</dbReference>
<dbReference type="SUPFAM" id="SSF46785">
    <property type="entry name" value="Winged helix' DNA-binding domain"/>
    <property type="match status" value="1"/>
</dbReference>
<dbReference type="PROSITE" id="PS50931">
    <property type="entry name" value="HTH_LYSR"/>
    <property type="match status" value="1"/>
</dbReference>
<name>SPVR_SALDU</name>
<feature type="chain" id="PRO_0000105681" description="Virulence genes transcriptional activator SpvR">
    <location>
        <begin position="1"/>
        <end position="297"/>
    </location>
</feature>
<feature type="domain" description="HTH lysR-type" evidence="1">
    <location>
        <begin position="1"/>
        <end position="61"/>
    </location>
</feature>
<feature type="DNA-binding region" description="H-T-H motif" evidence="1">
    <location>
        <begin position="21"/>
        <end position="40"/>
    </location>
</feature>
<sequence>MDFLINKKLKIFITLMETGSFSIATSVLYITRTPLSRVISGLERELKQRLFIRKNGTLIPTEFAQTIYRKVKSHYIFLHALEQEIGPTGKTKQLEIIFDEIYPESLKNLIISALTISGQKTNIMGRAVNSQIIEELCQTNNCIVISARNYFHRESLVCRTSVEGGVMLFIPKKFFLCGKPDINRLAGTPVLFHEGAKNFNLDTIYHFFEQTLGITNPAFSFDNVDLFSSLYRLQQGLAMLLIPVRVCRALGLSTDHALHIKGVALCTSLYYPTKKRETPDYRKAIKLIQQELKQSTF</sequence>